<feature type="chain" id="PRO_0000082053" description="ATP synthase subunit a">
    <location>
        <begin position="1"/>
        <end position="271"/>
    </location>
</feature>
<feature type="topological domain" description="Periplasmic" evidence="3">
    <location>
        <begin position="1"/>
        <end position="39"/>
    </location>
</feature>
<feature type="transmembrane region" description="Helical" evidence="3">
    <location>
        <begin position="40"/>
        <end position="60"/>
    </location>
</feature>
<feature type="topological domain" description="Cytoplasmic" evidence="3">
    <location>
        <begin position="61"/>
        <end position="99"/>
    </location>
</feature>
<feature type="transmembrane region" description="Helical" evidence="3">
    <location>
        <begin position="100"/>
        <end position="120"/>
    </location>
</feature>
<feature type="topological domain" description="Periplasmic" evidence="3">
    <location>
        <begin position="121"/>
        <end position="145"/>
    </location>
</feature>
<feature type="transmembrane region" description="Helical" evidence="3">
    <location>
        <begin position="146"/>
        <end position="166"/>
    </location>
</feature>
<feature type="topological domain" description="Cytoplasmic" evidence="3">
    <location>
        <begin position="167"/>
        <end position="219"/>
    </location>
</feature>
<feature type="transmembrane region" description="Helical" evidence="3">
    <location>
        <begin position="220"/>
        <end position="240"/>
    </location>
</feature>
<feature type="topological domain" description="Periplasmic" evidence="3">
    <location>
        <position position="241"/>
    </location>
</feature>
<feature type="transmembrane region" description="Helical" evidence="3">
    <location>
        <begin position="242"/>
        <end position="262"/>
    </location>
</feature>
<feature type="topological domain" description="Cytoplasmic" evidence="3">
    <location>
        <begin position="263"/>
        <end position="271"/>
    </location>
</feature>
<feature type="mutagenesis site" description="Reduced activity.">
    <original>S</original>
    <variation>L</variation>
    <location>
        <position position="206"/>
    </location>
</feature>
<feature type="mutagenesis site" description="No change in activity.">
    <original>L</original>
    <variation>Y</variation>
    <variation>F</variation>
    <location>
        <position position="207"/>
    </location>
</feature>
<feature type="mutagenesis site" description="Completely defective.">
    <original>R</original>
    <variation>K</variation>
    <variation>I</variation>
    <variation>V</variation>
    <variation>E</variation>
    <location>
        <position position="210"/>
    </location>
</feature>
<feature type="mutagenesis site" description="Completely defective.">
    <original>N</original>
    <variation>H</variation>
    <location>
        <position position="214"/>
    </location>
</feature>
<feature type="mutagenesis site" description="Reduced activity.">
    <original>N</original>
    <variation>V</variation>
    <location>
        <position position="214"/>
    </location>
</feature>
<feature type="mutagenesis site" description="Reduced activity.">
    <original>A</original>
    <variation>H</variation>
    <location>
        <position position="217"/>
    </location>
</feature>
<feature type="mutagenesis site" description="Completely defective.">
    <original>A</original>
    <variation>R</variation>
    <location>
        <position position="217"/>
    </location>
</feature>
<feature type="mutagenesis site" description="Reduced activity.">
    <original>H</original>
    <variation>Y</variation>
    <location>
        <position position="245"/>
    </location>
</feature>
<feature type="sequence conflict" description="In Ref. 2; CAA23521." evidence="3" ref="2">
    <original>V</original>
    <variation>M</variation>
    <location>
        <position position="71"/>
    </location>
</feature>
<feature type="sequence conflict" description="In Ref. 4; CAA23590." evidence="3" ref="4">
    <original>TLQP</original>
    <variation>RCST</variation>
    <location>
        <begin position="179"/>
        <end position="182"/>
    </location>
</feature>
<feature type="sequence conflict" description="In Ref. 6; AAA24740." evidence="3" ref="6">
    <original>F</original>
    <variation>S</variation>
    <location>
        <position position="188"/>
    </location>
</feature>
<feature type="helix" evidence="5">
    <location>
        <begin position="8"/>
        <end position="14"/>
    </location>
</feature>
<feature type="strand" evidence="5">
    <location>
        <begin position="20"/>
        <end position="22"/>
    </location>
</feature>
<feature type="turn" evidence="5">
    <location>
        <begin position="23"/>
        <end position="25"/>
    </location>
</feature>
<feature type="strand" evidence="6">
    <location>
        <begin position="26"/>
        <end position="29"/>
    </location>
</feature>
<feature type="strand" evidence="5">
    <location>
        <begin position="31"/>
        <end position="33"/>
    </location>
</feature>
<feature type="strand" evidence="7">
    <location>
        <begin position="36"/>
        <end position="38"/>
    </location>
</feature>
<feature type="strand" evidence="5">
    <location>
        <begin position="40"/>
        <end position="43"/>
    </location>
</feature>
<feature type="turn" evidence="5">
    <location>
        <begin position="44"/>
        <end position="46"/>
    </location>
</feature>
<feature type="helix" evidence="5">
    <location>
        <begin position="47"/>
        <end position="64"/>
    </location>
</feature>
<feature type="strand" evidence="5">
    <location>
        <begin position="69"/>
        <end position="71"/>
    </location>
</feature>
<feature type="helix" evidence="5">
    <location>
        <begin position="74"/>
        <end position="93"/>
    </location>
</feature>
<feature type="helix" evidence="5">
    <location>
        <begin position="101"/>
        <end position="117"/>
    </location>
</feature>
<feature type="helix" evidence="5">
    <location>
        <begin position="118"/>
        <end position="120"/>
    </location>
</feature>
<feature type="helix" evidence="5">
    <location>
        <begin position="125"/>
        <end position="132"/>
    </location>
</feature>
<feature type="helix" evidence="5">
    <location>
        <begin position="143"/>
        <end position="145"/>
    </location>
</feature>
<feature type="helix" evidence="5">
    <location>
        <begin position="147"/>
        <end position="180"/>
    </location>
</feature>
<feature type="turn" evidence="5">
    <location>
        <begin position="181"/>
        <end position="184"/>
    </location>
</feature>
<feature type="helix" evidence="5">
    <location>
        <begin position="186"/>
        <end position="188"/>
    </location>
</feature>
<feature type="helix" evidence="5">
    <location>
        <begin position="189"/>
        <end position="228"/>
    </location>
</feature>
<feature type="helix" evidence="5">
    <location>
        <begin position="231"/>
        <end position="234"/>
    </location>
</feature>
<feature type="helix" evidence="5">
    <location>
        <begin position="235"/>
        <end position="268"/>
    </location>
</feature>
<keyword id="KW-0002">3D-structure</keyword>
<keyword id="KW-0066">ATP synthesis</keyword>
<keyword id="KW-0997">Cell inner membrane</keyword>
<keyword id="KW-1003">Cell membrane</keyword>
<keyword id="KW-0138">CF(0)</keyword>
<keyword id="KW-0375">Hydrogen ion transport</keyword>
<keyword id="KW-0406">Ion transport</keyword>
<keyword id="KW-0472">Membrane</keyword>
<keyword id="KW-1185">Reference proteome</keyword>
<keyword id="KW-0812">Transmembrane</keyword>
<keyword id="KW-1133">Transmembrane helix</keyword>
<keyword id="KW-0813">Transport</keyword>
<reference key="1">
    <citation type="journal article" date="1984" name="Biochem. J.">
        <title>DNA sequence around the Escherichia coli unc operon. Completion of the sequence of a 17 kilobase segment containing asnA, oriC, unc, glmS and phoS.</title>
        <authorList>
            <person name="Walker J.E."/>
            <person name="Gay N.J."/>
            <person name="Saraste M."/>
            <person name="Eberle A.N."/>
        </authorList>
    </citation>
    <scope>NUCLEOTIDE SEQUENCE [GENOMIC DNA]</scope>
</reference>
<reference key="2">
    <citation type="journal article" date="1981" name="Nucleic Acids Res.">
        <title>The atp operon: nucleotide sequence of the promoter and the genes for the membrane proteins, and the delta subunit of Escherichia coli ATP-synthase.</title>
        <authorList>
            <person name="Gay N.J."/>
            <person name="Walker J.E."/>
        </authorList>
    </citation>
    <scope>NUCLEOTIDE SEQUENCE [GENOMIC DNA]</scope>
</reference>
<reference key="3">
    <citation type="journal article" date="1981" name="Mol. Gen. Genet.">
        <title>The nucleotide sequence of the atp genes coding for the F0 subunits a, b, c and the F1 subunit delta of the membrane bound ATP synthase of Escherichia coli.</title>
        <authorList>
            <person name="Nielsen J."/>
            <person name="Hansen F.G."/>
            <person name="Hoppe J."/>
            <person name="Friedl P."/>
            <person name="von Meyenburg K."/>
        </authorList>
    </citation>
    <scope>NUCLEOTIDE SEQUENCE [GENOMIC DNA]</scope>
</reference>
<reference key="4">
    <citation type="journal article" date="1981" name="Biochem. Biophys. Res. Commun.">
        <title>Nucleotide sequence of the genes for F0 components of the proton-translocating ATPase from Escherichia coli: prediction of the primary structure of F0 subunits.</title>
        <authorList>
            <person name="Kanazawa H."/>
            <person name="Mabuchi K."/>
            <person name="Kayano T."/>
            <person name="Noumi T."/>
            <person name="Sekiya T."/>
            <person name="Futai M."/>
        </authorList>
    </citation>
    <scope>NUCLEOTIDE SEQUENCE [GENOMIC DNA]</scope>
</reference>
<reference key="5">
    <citation type="journal article" date="1982" name="Ann. N. Y. Acad. Sci.">
        <title>Structure and function of H+-ATPase: what we have learned from Escherichia coli H+-ATPase.</title>
        <authorList>
            <person name="Kanazawa H."/>
            <person name="Futai M."/>
        </authorList>
    </citation>
    <scope>NUCLEOTIDE SEQUENCE [GENOMIC DNA]</scope>
</reference>
<reference key="6">
    <citation type="journal article" date="1986" name="J. Biol. Chem.">
        <title>Impaired proton conductivity resulting from mutations in the a subunit of F1F0 ATPase in Escherichia coli.</title>
        <authorList>
            <person name="Cai B.D."/>
            <person name="Simoni R.D."/>
        </authorList>
    </citation>
    <scope>NUCLEOTIDE SEQUENCE [GENOMIC DNA]</scope>
    <scope>MUTAGENESIS</scope>
</reference>
<reference key="7">
    <citation type="journal article" date="1993" name="Genomics">
        <title>DNA sequence and analysis of 136 kilobases of the Escherichia coli genome: organizational symmetry around the origin of replication.</title>
        <authorList>
            <person name="Burland V.D."/>
            <person name="Plunkett G. III"/>
            <person name="Daniels D.L."/>
            <person name="Blattner F.R."/>
        </authorList>
    </citation>
    <scope>NUCLEOTIDE SEQUENCE [LARGE SCALE GENOMIC DNA]</scope>
    <source>
        <strain>K12 / MG1655 / ATCC 47076</strain>
    </source>
</reference>
<reference key="8">
    <citation type="journal article" date="1997" name="Science">
        <title>The complete genome sequence of Escherichia coli K-12.</title>
        <authorList>
            <person name="Blattner F.R."/>
            <person name="Plunkett G. III"/>
            <person name="Bloch C.A."/>
            <person name="Perna N.T."/>
            <person name="Burland V."/>
            <person name="Riley M."/>
            <person name="Collado-Vides J."/>
            <person name="Glasner J.D."/>
            <person name="Rode C.K."/>
            <person name="Mayhew G.F."/>
            <person name="Gregor J."/>
            <person name="Davis N.W."/>
            <person name="Kirkpatrick H.A."/>
            <person name="Goeden M.A."/>
            <person name="Rose D.J."/>
            <person name="Mau B."/>
            <person name="Shao Y."/>
        </authorList>
    </citation>
    <scope>NUCLEOTIDE SEQUENCE [LARGE SCALE GENOMIC DNA]</scope>
    <source>
        <strain>K12 / MG1655 / ATCC 47076</strain>
    </source>
</reference>
<reference key="9">
    <citation type="journal article" date="2006" name="Mol. Syst. Biol.">
        <title>Highly accurate genome sequences of Escherichia coli K-12 strains MG1655 and W3110.</title>
        <authorList>
            <person name="Hayashi K."/>
            <person name="Morooka N."/>
            <person name="Yamamoto Y."/>
            <person name="Fujita K."/>
            <person name="Isono K."/>
            <person name="Choi S."/>
            <person name="Ohtsubo E."/>
            <person name="Baba T."/>
            <person name="Wanner B.L."/>
            <person name="Mori H."/>
            <person name="Horiuchi T."/>
        </authorList>
    </citation>
    <scope>NUCLEOTIDE SEQUENCE [LARGE SCALE GENOMIC DNA]</scope>
    <source>
        <strain>K12 / W3110 / ATCC 27325 / DSM 5911</strain>
    </source>
</reference>
<reference key="10">
    <citation type="journal article" date="1984" name="J. Bacteriol.">
        <title>Overproduction of subunit a of the F0 component of proton-translocating ATPase inhibits growth of Escherichia coli cells.</title>
        <authorList>
            <person name="Kanazawa H."/>
            <person name="Kiyasu T."/>
            <person name="Noumi T."/>
            <person name="Futai M."/>
        </authorList>
    </citation>
    <scope>NUCLEOTIDE SEQUENCE [GENOMIC DNA] OF 1-92</scope>
</reference>
<reference key="11">
    <citation type="journal article" date="1984" name="Mol. Gen. Genet.">
        <title>The promoters of the atp operon of Escherichia coli K12.</title>
        <authorList>
            <person name="Nielsen J."/>
            <person name="Joergensen B.B."/>
            <person name="von Meyenburg K."/>
            <person name="Hansen F.G."/>
        </authorList>
    </citation>
    <scope>NUCLEOTIDE SEQUENCE [GENOMIC DNA] OF 1-32</scope>
    <source>
        <strain>K12</strain>
    </source>
</reference>
<reference key="12">
    <citation type="journal article" date="1986" name="J. Biol. Chem.">
        <title>Genetic evidence for interaction between the a and b subunits of the F0 portion of the Escherichia coli proton translocating ATPase.</title>
        <authorList>
            <person name="Kumamoto C.A."/>
            <person name="Simoni R.D."/>
        </authorList>
    </citation>
    <scope>NUCLEOTIDE SEQUENCE [GENOMIC DNA] OF 235-271</scope>
</reference>
<reference key="13">
    <citation type="journal article" date="1989" name="J. Biol. Chem.">
        <title>Proton translocation by the F1F0ATPase of Escherichia coli. Mutagenic analysis of the a subunit.</title>
        <authorList>
            <person name="Cain B.D."/>
            <person name="Simoni R.D."/>
        </authorList>
    </citation>
    <scope>MUTAGENESIS</scope>
</reference>
<reference key="14">
    <citation type="journal article" date="1991" name="J. Bacteriol.">
        <title>Temperature-sensitive mutations at the carboxy terminus of the alpha subunit of the Escherichia coli F1F0 ATP synthase.</title>
        <authorList>
            <person name="Vik S.B."/>
            <person name="Lee D."/>
            <person name="Marshall P.A."/>
        </authorList>
    </citation>
    <scope>MUTAGENESIS</scope>
</reference>
<reference key="15">
    <citation type="journal article" date="1990" name="J. Biol. Chem.">
        <title>A topological analysis of subunit alpha from Escherichia coli F1F0-ATP synthase predicts eight transmembrane segments.</title>
        <authorList>
            <person name="Lewis M.L."/>
            <person name="Chang J.A."/>
            <person name="Simoni R.D."/>
        </authorList>
    </citation>
    <scope>TOPOLOGY</scope>
</reference>
<reference key="16">
    <citation type="journal article" date="1990" name="FEBS Lett.">
        <title>The transmembrane topology of the a subunit from the ATPase in Escherichia coli analyzed by PhoA protein fusions.</title>
        <authorList>
            <person name="Bjorbaek C."/>
            <person name="Foersom V."/>
            <person name="Michelsen O."/>
        </authorList>
    </citation>
    <scope>TOPOLOGY</scope>
</reference>
<reference key="17">
    <citation type="journal article" date="1996" name="FEBS Lett.">
        <title>Transmembrane topology of Escherichia coli H(+)-ATPase (ATP synthase) subunit a.</title>
        <authorList>
            <person name="Yamada H."/>
            <person name="Moriyama Y."/>
            <person name="Maeda M."/>
            <person name="Futai M."/>
        </authorList>
    </citation>
    <scope>TOPOLOGY</scope>
</reference>
<reference key="18">
    <citation type="journal article" date="1998" name="J. Biol. Chem.">
        <title>Transmembrane topography of subunit a in the Escherichia coli F1F0 ATP synthase.</title>
        <authorList>
            <person name="Valiyaveetil F.I."/>
            <person name="Fillingame R.H."/>
        </authorList>
    </citation>
    <scope>TOPOLOGY</scope>
</reference>
<reference key="19">
    <citation type="journal article" date="2005" name="Science">
        <title>Global topology analysis of the Escherichia coli inner membrane proteome.</title>
        <authorList>
            <person name="Daley D.O."/>
            <person name="Rapp M."/>
            <person name="Granseth E."/>
            <person name="Melen K."/>
            <person name="Drew D."/>
            <person name="von Heijne G."/>
        </authorList>
    </citation>
    <scope>SUBCELLULAR LOCATION</scope>
    <source>
        <strain>K12 / MG1655 / ATCC 47076</strain>
    </source>
</reference>
<reference key="20">
    <citation type="journal article" date="1999" name="Nature">
        <title>Structural changes linked to proton translocation by subunit c of the ATP synthase.</title>
        <authorList>
            <person name="Rastogi V.K."/>
            <person name="Girvin M.E."/>
        </authorList>
    </citation>
    <scope>STRUCTURE BY NMR OF 95-271</scope>
</reference>
<proteinExistence type="evidence at protein level"/>
<dbReference type="EMBL" id="J01594">
    <property type="protein sequence ID" value="AAA24731.1"/>
    <property type="molecule type" value="Genomic_DNA"/>
</dbReference>
<dbReference type="EMBL" id="X01631">
    <property type="protein sequence ID" value="CAA25776.1"/>
    <property type="molecule type" value="Genomic_DNA"/>
</dbReference>
<dbReference type="EMBL" id="V00264">
    <property type="protein sequence ID" value="CAA23514.1"/>
    <property type="molecule type" value="Genomic_DNA"/>
</dbReference>
<dbReference type="EMBL" id="V00266">
    <property type="protein sequence ID" value="CAA23520.1"/>
    <property type="molecule type" value="Genomic_DNA"/>
</dbReference>
<dbReference type="EMBL" id="V00266">
    <property type="protein sequence ID" value="CAA23521.1"/>
    <property type="molecule type" value="Genomic_DNA"/>
</dbReference>
<dbReference type="EMBL" id="V00310">
    <property type="protein sequence ID" value="CAA23590.1"/>
    <property type="molecule type" value="Genomic_DNA"/>
</dbReference>
<dbReference type="EMBL" id="M25464">
    <property type="protein sequence ID" value="AAA83869.2"/>
    <property type="molecule type" value="Genomic_DNA"/>
</dbReference>
<dbReference type="EMBL" id="M14019">
    <property type="protein sequence ID" value="AAA24740.1"/>
    <property type="molecule type" value="Genomic_DNA"/>
</dbReference>
<dbReference type="EMBL" id="L10328">
    <property type="protein sequence ID" value="AAA62090.1"/>
    <property type="molecule type" value="Genomic_DNA"/>
</dbReference>
<dbReference type="EMBL" id="U00096">
    <property type="protein sequence ID" value="AAC76761.1"/>
    <property type="molecule type" value="Genomic_DNA"/>
</dbReference>
<dbReference type="EMBL" id="AP009048">
    <property type="protein sequence ID" value="BAE77550.1"/>
    <property type="molecule type" value="Genomic_DNA"/>
</dbReference>
<dbReference type="EMBL" id="X01383">
    <property type="protein sequence ID" value="CAA25641.1"/>
    <property type="molecule type" value="Genomic_DNA"/>
</dbReference>
<dbReference type="EMBL" id="M29174">
    <property type="protein sequence ID" value="AAA24423.1"/>
    <property type="molecule type" value="Genomic_DNA"/>
</dbReference>
<dbReference type="PIR" id="C93732">
    <property type="entry name" value="LWEC6"/>
</dbReference>
<dbReference type="RefSeq" id="NP_418194.1">
    <property type="nucleotide sequence ID" value="NC_000913.3"/>
</dbReference>
<dbReference type="RefSeq" id="WP_000135625.1">
    <property type="nucleotide sequence ID" value="NZ_SSZK01000036.1"/>
</dbReference>
<dbReference type="PDB" id="1C17">
    <property type="method" value="NMR"/>
    <property type="chains" value="M=95-271"/>
</dbReference>
<dbReference type="PDB" id="5T4O">
    <property type="method" value="EM"/>
    <property type="resolution" value="6.90 A"/>
    <property type="chains" value="K=1-271"/>
</dbReference>
<dbReference type="PDB" id="5T4P">
    <property type="method" value="EM"/>
    <property type="resolution" value="7.77 A"/>
    <property type="chains" value="K=1-271"/>
</dbReference>
<dbReference type="PDB" id="5T4Q">
    <property type="method" value="EM"/>
    <property type="resolution" value="8.53 A"/>
    <property type="chains" value="K=1-271"/>
</dbReference>
<dbReference type="PDB" id="6OQR">
    <property type="method" value="EM"/>
    <property type="resolution" value="3.10 A"/>
    <property type="chains" value="a=1-271"/>
</dbReference>
<dbReference type="PDB" id="6OQS">
    <property type="method" value="EM"/>
    <property type="resolution" value="3.30 A"/>
    <property type="chains" value="a=1-271"/>
</dbReference>
<dbReference type="PDB" id="6OQT">
    <property type="method" value="EM"/>
    <property type="resolution" value="3.10 A"/>
    <property type="chains" value="a=1-271"/>
</dbReference>
<dbReference type="PDB" id="6OQU">
    <property type="method" value="EM"/>
    <property type="resolution" value="3.20 A"/>
    <property type="chains" value="a=1-271"/>
</dbReference>
<dbReference type="PDB" id="6OQV">
    <property type="method" value="EM"/>
    <property type="resolution" value="3.30 A"/>
    <property type="chains" value="a=1-271"/>
</dbReference>
<dbReference type="PDB" id="6OQW">
    <property type="method" value="EM"/>
    <property type="resolution" value="3.10 A"/>
    <property type="chains" value="a=1-271"/>
</dbReference>
<dbReference type="PDB" id="6PQV">
    <property type="method" value="EM"/>
    <property type="resolution" value="3.30 A"/>
    <property type="chains" value="a=1-271"/>
</dbReference>
<dbReference type="PDB" id="6VWK">
    <property type="method" value="EM"/>
    <property type="resolution" value="3.30 A"/>
    <property type="chains" value="a=1-271"/>
</dbReference>
<dbReference type="PDB" id="6WNQ">
    <property type="method" value="EM"/>
    <property type="resolution" value="3.40 A"/>
    <property type="chains" value="a=1-271"/>
</dbReference>
<dbReference type="PDB" id="6WNR">
    <property type="method" value="EM"/>
    <property type="resolution" value="3.30 A"/>
    <property type="chains" value="a=1-271"/>
</dbReference>
<dbReference type="PDB" id="8DBP">
    <property type="method" value="EM"/>
    <property type="resolution" value="3.60 A"/>
    <property type="chains" value="a=1-271"/>
</dbReference>
<dbReference type="PDB" id="8DBQ">
    <property type="method" value="EM"/>
    <property type="resolution" value="4.00 A"/>
    <property type="chains" value="a=4-269"/>
</dbReference>
<dbReference type="PDB" id="8DBR">
    <property type="method" value="EM"/>
    <property type="resolution" value="3.20 A"/>
    <property type="chains" value="a=1-271"/>
</dbReference>
<dbReference type="PDB" id="8DBS">
    <property type="method" value="EM"/>
    <property type="resolution" value="3.50 A"/>
    <property type="chains" value="a=4-269"/>
</dbReference>
<dbReference type="PDB" id="8DBT">
    <property type="method" value="EM"/>
    <property type="resolution" value="3.10 A"/>
    <property type="chains" value="a=1-271"/>
</dbReference>
<dbReference type="PDB" id="8DBU">
    <property type="method" value="EM"/>
    <property type="resolution" value="3.40 A"/>
    <property type="chains" value="a=1-271"/>
</dbReference>
<dbReference type="PDB" id="8DBV">
    <property type="method" value="EM"/>
    <property type="resolution" value="3.70 A"/>
    <property type="chains" value="a=1-271"/>
</dbReference>
<dbReference type="PDB" id="8DBW">
    <property type="method" value="EM"/>
    <property type="resolution" value="4.10 A"/>
    <property type="chains" value="a=4-269"/>
</dbReference>
<dbReference type="PDBsum" id="1C17"/>
<dbReference type="PDBsum" id="5T4O"/>
<dbReference type="PDBsum" id="5T4P"/>
<dbReference type="PDBsum" id="5T4Q"/>
<dbReference type="PDBsum" id="6OQR"/>
<dbReference type="PDBsum" id="6OQS"/>
<dbReference type="PDBsum" id="6OQT"/>
<dbReference type="PDBsum" id="6OQU"/>
<dbReference type="PDBsum" id="6OQV"/>
<dbReference type="PDBsum" id="6OQW"/>
<dbReference type="PDBsum" id="6PQV"/>
<dbReference type="PDBsum" id="6VWK"/>
<dbReference type="PDBsum" id="6WNQ"/>
<dbReference type="PDBsum" id="6WNR"/>
<dbReference type="PDBsum" id="8DBP"/>
<dbReference type="PDBsum" id="8DBQ"/>
<dbReference type="PDBsum" id="8DBR"/>
<dbReference type="PDBsum" id="8DBS"/>
<dbReference type="PDBsum" id="8DBT"/>
<dbReference type="PDBsum" id="8DBU"/>
<dbReference type="PDBsum" id="8DBV"/>
<dbReference type="PDBsum" id="8DBW"/>
<dbReference type="SMR" id="P0AB98"/>
<dbReference type="BioGRID" id="4262600">
    <property type="interactions" value="50"/>
</dbReference>
<dbReference type="ComplexPortal" id="CPX-4022">
    <property type="entry name" value="ATP synthase complex"/>
</dbReference>
<dbReference type="DIP" id="DIP-47956N"/>
<dbReference type="FunCoup" id="P0AB98">
    <property type="interactions" value="459"/>
</dbReference>
<dbReference type="IntAct" id="P0AB98">
    <property type="interactions" value="2"/>
</dbReference>
<dbReference type="MINT" id="P0AB98"/>
<dbReference type="STRING" id="511145.b3738"/>
<dbReference type="ChEMBL" id="CHEMBL1075074"/>
<dbReference type="TCDB" id="3.A.2.1.1">
    <property type="family name" value="the h+- or na+-translocating f-type, v-type and a-type atpase (f-atpase) superfamily"/>
</dbReference>
<dbReference type="jPOST" id="P0AB98"/>
<dbReference type="PaxDb" id="511145-b3738"/>
<dbReference type="EnsemblBacteria" id="AAC76761">
    <property type="protein sequence ID" value="AAC76761"/>
    <property type="gene ID" value="b3738"/>
</dbReference>
<dbReference type="GeneID" id="93778229"/>
<dbReference type="GeneID" id="948252"/>
<dbReference type="KEGG" id="ecj:JW3716"/>
<dbReference type="KEGG" id="eco:b3738"/>
<dbReference type="KEGG" id="ecoc:C3026_20255"/>
<dbReference type="PATRIC" id="fig|1411691.4.peg.2962"/>
<dbReference type="EchoBASE" id="EB0097"/>
<dbReference type="eggNOG" id="COG0356">
    <property type="taxonomic scope" value="Bacteria"/>
</dbReference>
<dbReference type="HOGENOM" id="CLU_041018_1_0_6"/>
<dbReference type="InParanoid" id="P0AB98"/>
<dbReference type="OMA" id="GFFWAAF"/>
<dbReference type="OrthoDB" id="9789241at2"/>
<dbReference type="PhylomeDB" id="P0AB98"/>
<dbReference type="BioCyc" id="EcoCyc:ATPB-MONOMER"/>
<dbReference type="BioCyc" id="MetaCyc:ATPB-MONOMER"/>
<dbReference type="EvolutionaryTrace" id="P0AB98"/>
<dbReference type="PRO" id="PR:P0AB98"/>
<dbReference type="Proteomes" id="UP000000625">
    <property type="component" value="Chromosome"/>
</dbReference>
<dbReference type="GO" id="GO:0005886">
    <property type="term" value="C:plasma membrane"/>
    <property type="evidence" value="ECO:0000314"/>
    <property type="project" value="EcoCyc"/>
</dbReference>
<dbReference type="GO" id="GO:0045259">
    <property type="term" value="C:proton-transporting ATP synthase complex"/>
    <property type="evidence" value="ECO:0000353"/>
    <property type="project" value="ComplexPortal"/>
</dbReference>
<dbReference type="GO" id="GO:0046933">
    <property type="term" value="F:proton-transporting ATP synthase activity, rotational mechanism"/>
    <property type="evidence" value="ECO:0000315"/>
    <property type="project" value="EcoCyc"/>
</dbReference>
<dbReference type="GO" id="GO:0042777">
    <property type="term" value="P:proton motive force-driven plasma membrane ATP synthesis"/>
    <property type="evidence" value="ECO:0000315"/>
    <property type="project" value="EcoCyc"/>
</dbReference>
<dbReference type="CDD" id="cd00310">
    <property type="entry name" value="ATP-synt_Fo_a_6"/>
    <property type="match status" value="1"/>
</dbReference>
<dbReference type="FunFam" id="1.20.120.220:FF:000002">
    <property type="entry name" value="ATP synthase subunit a"/>
    <property type="match status" value="1"/>
</dbReference>
<dbReference type="Gene3D" id="1.20.120.220">
    <property type="entry name" value="ATP synthase, F0 complex, subunit A"/>
    <property type="match status" value="1"/>
</dbReference>
<dbReference type="HAMAP" id="MF_01393">
    <property type="entry name" value="ATP_synth_a_bact"/>
    <property type="match status" value="1"/>
</dbReference>
<dbReference type="InterPro" id="IPR045082">
    <property type="entry name" value="ATP_syn_F0_a_bact/chloroplast"/>
</dbReference>
<dbReference type="InterPro" id="IPR000568">
    <property type="entry name" value="ATP_synth_F0_asu"/>
</dbReference>
<dbReference type="InterPro" id="IPR023011">
    <property type="entry name" value="ATP_synth_F0_asu_AS"/>
</dbReference>
<dbReference type="InterPro" id="IPR035908">
    <property type="entry name" value="F0_ATP_A_sf"/>
</dbReference>
<dbReference type="NCBIfam" id="TIGR01131">
    <property type="entry name" value="ATP_synt_6_or_A"/>
    <property type="match status" value="1"/>
</dbReference>
<dbReference type="NCBIfam" id="NF004477">
    <property type="entry name" value="PRK05815.1-1"/>
    <property type="match status" value="1"/>
</dbReference>
<dbReference type="PANTHER" id="PTHR42823">
    <property type="entry name" value="ATP SYNTHASE SUBUNIT A, CHLOROPLASTIC"/>
    <property type="match status" value="1"/>
</dbReference>
<dbReference type="PANTHER" id="PTHR42823:SF3">
    <property type="entry name" value="ATP SYNTHASE SUBUNIT A, CHLOROPLASTIC"/>
    <property type="match status" value="1"/>
</dbReference>
<dbReference type="Pfam" id="PF00119">
    <property type="entry name" value="ATP-synt_A"/>
    <property type="match status" value="1"/>
</dbReference>
<dbReference type="PRINTS" id="PR00123">
    <property type="entry name" value="ATPASEA"/>
</dbReference>
<dbReference type="SUPFAM" id="SSF81336">
    <property type="entry name" value="F1F0 ATP synthase subunit A"/>
    <property type="match status" value="1"/>
</dbReference>
<dbReference type="PROSITE" id="PS00449">
    <property type="entry name" value="ATPASE_A"/>
    <property type="match status" value="1"/>
</dbReference>
<evidence type="ECO:0000255" key="1">
    <source>
        <dbReference type="HAMAP-Rule" id="MF_01393"/>
    </source>
</evidence>
<evidence type="ECO:0000269" key="2">
    <source>
    </source>
</evidence>
<evidence type="ECO:0000305" key="3"/>
<evidence type="ECO:0000305" key="4">
    <source>
    </source>
</evidence>
<evidence type="ECO:0007829" key="5">
    <source>
        <dbReference type="PDB" id="6OQR"/>
    </source>
</evidence>
<evidence type="ECO:0007829" key="6">
    <source>
        <dbReference type="PDB" id="6OQU"/>
    </source>
</evidence>
<evidence type="ECO:0007829" key="7">
    <source>
        <dbReference type="PDB" id="6WNR"/>
    </source>
</evidence>
<comment type="function">
    <text>Key component of the proton channel; it plays a direct role in the translocation of protons across the membrane.</text>
</comment>
<comment type="subunit">
    <text>F-type ATPases have 2 components, CF(1) - the catalytic core - and CF(0) - the membrane proton channel. CF(1) has five subunits: alpha(3), beta(3), gamma(1), delta(1), epsilon(1). CF(0) has three main subunits: a(1), b(2) and c(9-12). The alpha and beta chains form an alternating ring which encloses part of the gamma chain. CF(1) is attached to CF(0) by a central stalk formed by the gamma and epsilon chains, while a peripheral stalk is formed by the delta and b chains.</text>
</comment>
<comment type="subcellular location">
    <subcellularLocation>
        <location evidence="1 2">Cell inner membrane</location>
        <topology evidence="1 2">Multi-pass membrane protein</topology>
    </subcellularLocation>
</comment>
<comment type="similarity">
    <text evidence="1">Belongs to the ATPase A chain family.</text>
</comment>
<comment type="caution">
    <text evidence="4">Was originally proposed to be encoded from either Met-1 or Val-71 (PID CAA23521); it is now thought to start of Met-1.</text>
</comment>
<name>ATP6_ECOLI</name>
<protein>
    <recommendedName>
        <fullName evidence="1">ATP synthase subunit a</fullName>
    </recommendedName>
    <alternativeName>
        <fullName evidence="1">ATP synthase F0 sector subunit a</fullName>
    </alternativeName>
    <alternativeName>
        <fullName evidence="1">F-ATPase subunit 6</fullName>
    </alternativeName>
</protein>
<organism>
    <name type="scientific">Escherichia coli (strain K12)</name>
    <dbReference type="NCBI Taxonomy" id="83333"/>
    <lineage>
        <taxon>Bacteria</taxon>
        <taxon>Pseudomonadati</taxon>
        <taxon>Pseudomonadota</taxon>
        <taxon>Gammaproteobacteria</taxon>
        <taxon>Enterobacterales</taxon>
        <taxon>Enterobacteriaceae</taxon>
        <taxon>Escherichia</taxon>
    </lineage>
</organism>
<gene>
    <name evidence="1" type="primary">atpB</name>
    <name type="synonym">papD</name>
    <name type="synonym">uncB</name>
    <name type="ordered locus">b3738</name>
    <name type="ordered locus">JW3716</name>
</gene>
<accession>P0AB98</accession>
<accession>P00855</accession>
<accession>Q2M856</accession>
<accession>Q47065</accession>
<accession>Q47708</accession>
<sequence>MASENMTPQDYIGHHLNNLQLDLRTFSLVDPQNPPATFWTINIDSMFFSVVLGLLFLVLFRSVAKKATSGVPGKFQTAIELVIGFVNGSVKDMYHGKSKLIAPLALTIFVWVFLMNLMDLLPIDLLPYIAEHVLGLPALRVVPSADVNVTLSMALGVFILILFYSIKMKGIGGFTKELTLQPFNHWAFIPVNLILEGVSLLSKPVSLGLRLFGNMYAGELIFILIAGLLPWWSQWILNVPWAIFHILIITLQAFIFMVLTIVYLSMASEEH</sequence>